<sequence>MFLMNILCLIIPILLAMAFLTLVERKILGYMQLRKGPNVVGPYGLLQPIADAIKLFIKEPLRPLTSSKTMFILAPTLAFSLALSMWIPMPMPHPLVNLNLGVLFILALSSLAVYSILWSGWASNSKYALIGALRAVAQTISYEVTLAIILLSIMMLNGSFTLSTLTTTQEHLWLIFPLWPLAMMWFISTLAETNRAPFDLTEGESELVSGFNVEYAAGPFALFFMAEYTNIIMMNALTTILFLGALHNPLFPELFTVNFVTKTLLLTVTFLWVRASYPRFRYDQLMHLLWKSFLPLTLALCMLHVSTPTMLAGIPPHM</sequence>
<keyword id="KW-0249">Electron transport</keyword>
<keyword id="KW-0472">Membrane</keyword>
<keyword id="KW-0496">Mitochondrion</keyword>
<keyword id="KW-0999">Mitochondrion inner membrane</keyword>
<keyword id="KW-0520">NAD</keyword>
<keyword id="KW-0679">Respiratory chain</keyword>
<keyword id="KW-1278">Translocase</keyword>
<keyword id="KW-0812">Transmembrane</keyword>
<keyword id="KW-1133">Transmembrane helix</keyword>
<keyword id="KW-0813">Transport</keyword>
<keyword id="KW-0830">Ubiquinone</keyword>
<comment type="function">
    <text evidence="1">Core subunit of the mitochondrial membrane respiratory chain NADH dehydrogenase (Complex I) that is believed to belong to the minimal assembly required for catalysis. Complex I functions in the transfer of electrons from NADH to the respiratory chain. The immediate electron acceptor for the enzyme is believed to be ubiquinone (By similarity).</text>
</comment>
<comment type="catalytic activity">
    <reaction>
        <text>a ubiquinone + NADH + 5 H(+)(in) = a ubiquinol + NAD(+) + 4 H(+)(out)</text>
        <dbReference type="Rhea" id="RHEA:29091"/>
        <dbReference type="Rhea" id="RHEA-COMP:9565"/>
        <dbReference type="Rhea" id="RHEA-COMP:9566"/>
        <dbReference type="ChEBI" id="CHEBI:15378"/>
        <dbReference type="ChEBI" id="CHEBI:16389"/>
        <dbReference type="ChEBI" id="CHEBI:17976"/>
        <dbReference type="ChEBI" id="CHEBI:57540"/>
        <dbReference type="ChEBI" id="CHEBI:57945"/>
        <dbReference type="EC" id="7.1.1.2"/>
    </reaction>
</comment>
<comment type="subcellular location">
    <subcellularLocation>
        <location evidence="1">Mitochondrion inner membrane</location>
        <topology evidence="1">Multi-pass membrane protein</topology>
    </subcellularLocation>
</comment>
<comment type="similarity">
    <text evidence="3">Belongs to the complex I subunit 1 family.</text>
</comment>
<proteinExistence type="inferred from homology"/>
<protein>
    <recommendedName>
        <fullName>NADH-ubiquinone oxidoreductase chain 1</fullName>
        <ecNumber>7.1.1.2</ecNumber>
    </recommendedName>
    <alternativeName>
        <fullName>NADH dehydrogenase subunit 1</fullName>
    </alternativeName>
</protein>
<reference key="1">
    <citation type="journal article" date="2003" name="Mol. Phylogenet. Evol.">
        <title>Molecular systematics of armadillos (Xenarthra, Dasypodidae): contribution of maximum likelihood and Bayesian analyses of mitochondrial and nuclear genes.</title>
        <authorList>
            <person name="Delsuc F."/>
            <person name="Stanhope M.J."/>
            <person name="Douzery E.J."/>
        </authorList>
    </citation>
    <scope>NUCLEOTIDE SEQUENCE [GENOMIC DNA]</scope>
</reference>
<organism>
    <name type="scientific">Priodontes maximus</name>
    <name type="common">Giant armadillo</name>
    <name type="synonym">Dasypus maximus</name>
    <dbReference type="NCBI Taxonomy" id="183752"/>
    <lineage>
        <taxon>Eukaryota</taxon>
        <taxon>Metazoa</taxon>
        <taxon>Chordata</taxon>
        <taxon>Craniata</taxon>
        <taxon>Vertebrata</taxon>
        <taxon>Euteleostomi</taxon>
        <taxon>Mammalia</taxon>
        <taxon>Eutheria</taxon>
        <taxon>Xenarthra</taxon>
        <taxon>Cingulata</taxon>
        <taxon>Chlamyphoridae</taxon>
        <taxon>Priodontes</taxon>
    </lineage>
</organism>
<geneLocation type="mitochondrion"/>
<name>NU1M_PRIMA</name>
<feature type="chain" id="PRO_0000117464" description="NADH-ubiquinone oxidoreductase chain 1">
    <location>
        <begin position="1"/>
        <end position="318"/>
    </location>
</feature>
<feature type="transmembrane region" description="Helical" evidence="2">
    <location>
        <begin position="2"/>
        <end position="22"/>
    </location>
</feature>
<feature type="transmembrane region" description="Helical" evidence="2">
    <location>
        <begin position="70"/>
        <end position="90"/>
    </location>
</feature>
<feature type="transmembrane region" description="Helical" evidence="2">
    <location>
        <begin position="100"/>
        <end position="120"/>
    </location>
</feature>
<feature type="transmembrane region" description="Helical" evidence="2">
    <location>
        <begin position="136"/>
        <end position="156"/>
    </location>
</feature>
<feature type="transmembrane region" description="Helical" evidence="2">
    <location>
        <begin position="171"/>
        <end position="191"/>
    </location>
</feature>
<feature type="transmembrane region" description="Helical" evidence="2">
    <location>
        <begin position="231"/>
        <end position="251"/>
    </location>
</feature>
<feature type="transmembrane region" description="Helical" evidence="2">
    <location>
        <begin position="253"/>
        <end position="273"/>
    </location>
</feature>
<feature type="transmembrane region" description="Helical" evidence="2">
    <location>
        <begin position="294"/>
        <end position="314"/>
    </location>
</feature>
<dbReference type="EC" id="7.1.1.2"/>
<dbReference type="EMBL" id="AJ505838">
    <property type="protein sequence ID" value="CAD44385.1"/>
    <property type="molecule type" value="Genomic_DNA"/>
</dbReference>
<dbReference type="RefSeq" id="YP_009184465.1">
    <property type="nucleotide sequence ID" value="NC_028573.1"/>
</dbReference>
<dbReference type="SMR" id="Q70Y22"/>
<dbReference type="GeneID" id="26377921"/>
<dbReference type="CTD" id="4535"/>
<dbReference type="GO" id="GO:0005743">
    <property type="term" value="C:mitochondrial inner membrane"/>
    <property type="evidence" value="ECO:0007669"/>
    <property type="project" value="UniProtKB-SubCell"/>
</dbReference>
<dbReference type="GO" id="GO:0008137">
    <property type="term" value="F:NADH dehydrogenase (ubiquinone) activity"/>
    <property type="evidence" value="ECO:0007669"/>
    <property type="project" value="UniProtKB-EC"/>
</dbReference>
<dbReference type="GO" id="GO:0009060">
    <property type="term" value="P:aerobic respiration"/>
    <property type="evidence" value="ECO:0007669"/>
    <property type="project" value="TreeGrafter"/>
</dbReference>
<dbReference type="HAMAP" id="MF_01350">
    <property type="entry name" value="NDH1_NuoH"/>
    <property type="match status" value="1"/>
</dbReference>
<dbReference type="InterPro" id="IPR001694">
    <property type="entry name" value="NADH_UbQ_OxRdtase_su1/FPO"/>
</dbReference>
<dbReference type="InterPro" id="IPR018086">
    <property type="entry name" value="NADH_UbQ_OxRdtase_su1_CS"/>
</dbReference>
<dbReference type="PANTHER" id="PTHR11432">
    <property type="entry name" value="NADH DEHYDROGENASE SUBUNIT 1"/>
    <property type="match status" value="1"/>
</dbReference>
<dbReference type="PANTHER" id="PTHR11432:SF3">
    <property type="entry name" value="NADH-UBIQUINONE OXIDOREDUCTASE CHAIN 1"/>
    <property type="match status" value="1"/>
</dbReference>
<dbReference type="Pfam" id="PF00146">
    <property type="entry name" value="NADHdh"/>
    <property type="match status" value="1"/>
</dbReference>
<dbReference type="PROSITE" id="PS00667">
    <property type="entry name" value="COMPLEX1_ND1_1"/>
    <property type="match status" value="1"/>
</dbReference>
<dbReference type="PROSITE" id="PS00668">
    <property type="entry name" value="COMPLEX1_ND1_2"/>
    <property type="match status" value="1"/>
</dbReference>
<evidence type="ECO:0000250" key="1"/>
<evidence type="ECO:0000255" key="2"/>
<evidence type="ECO:0000305" key="3"/>
<accession>Q70Y22</accession>
<gene>
    <name type="primary">MT-ND1</name>
    <name type="synonym">MTND1</name>
    <name type="synonym">NADH1</name>
    <name type="synonym">ND1</name>
</gene>